<protein>
    <recommendedName>
        <fullName evidence="1">Orotidine 5'-phosphate decarboxylase</fullName>
        <ecNumber evidence="1">4.1.1.23</ecNumber>
    </recommendedName>
    <alternativeName>
        <fullName evidence="1">OMP decarboxylase</fullName>
        <shortName evidence="1">OMPDCase</shortName>
        <shortName evidence="1">OMPdecase</shortName>
    </alternativeName>
</protein>
<sequence>MINPVYVAIDTTEAARAIALAERLKGQVGGFKLGLEYFTANGPAGMEAVSGLGMPLFVDLKLHDIPNTVAAAMKGVVRLGAAITTIHASGGAAMIRAAVDAANDEAAKLGIAPPAVVAVTVLTSLDQAGAEQVGFERPVLDQVKRLATLAQDSGAAGIVCSPLEVEAVRALCGPDFKLVIPGIRPAWSEAGDQKRFLTPAEARAKGADVLVIGRPITAAADPAEAAGRIKAELGL</sequence>
<reference key="1">
    <citation type="journal article" date="2005" name="DNA Res.">
        <title>Complete genome sequence of the facultative anaerobic magnetotactic bacterium Magnetospirillum sp. strain AMB-1.</title>
        <authorList>
            <person name="Matsunaga T."/>
            <person name="Okamura Y."/>
            <person name="Fukuda Y."/>
            <person name="Wahyudi A.T."/>
            <person name="Murase Y."/>
            <person name="Takeyama H."/>
        </authorList>
    </citation>
    <scope>NUCLEOTIDE SEQUENCE [LARGE SCALE GENOMIC DNA]</scope>
    <source>
        <strain>ATCC 700264 / AMB-1</strain>
    </source>
</reference>
<comment type="function">
    <text evidence="1">Catalyzes the decarboxylation of orotidine 5'-monophosphate (OMP) to uridine 5'-monophosphate (UMP).</text>
</comment>
<comment type="catalytic activity">
    <reaction evidence="1">
        <text>orotidine 5'-phosphate + H(+) = UMP + CO2</text>
        <dbReference type="Rhea" id="RHEA:11596"/>
        <dbReference type="ChEBI" id="CHEBI:15378"/>
        <dbReference type="ChEBI" id="CHEBI:16526"/>
        <dbReference type="ChEBI" id="CHEBI:57538"/>
        <dbReference type="ChEBI" id="CHEBI:57865"/>
        <dbReference type="EC" id="4.1.1.23"/>
    </reaction>
</comment>
<comment type="pathway">
    <text evidence="1">Pyrimidine metabolism; UMP biosynthesis via de novo pathway; UMP from orotate: step 2/2.</text>
</comment>
<comment type="subunit">
    <text evidence="1">Homodimer.</text>
</comment>
<comment type="similarity">
    <text evidence="1">Belongs to the OMP decarboxylase family. Type 1 subfamily.</text>
</comment>
<dbReference type="EC" id="4.1.1.23" evidence="1"/>
<dbReference type="EMBL" id="AP007255">
    <property type="protein sequence ID" value="BAE52806.1"/>
    <property type="molecule type" value="Genomic_DNA"/>
</dbReference>
<dbReference type="RefSeq" id="WP_011386355.1">
    <property type="nucleotide sequence ID" value="NC_007626.1"/>
</dbReference>
<dbReference type="SMR" id="Q2W019"/>
<dbReference type="STRING" id="342108.amb4002"/>
<dbReference type="KEGG" id="mag:amb4002"/>
<dbReference type="HOGENOM" id="CLU_067069_1_0_5"/>
<dbReference type="OrthoDB" id="9806203at2"/>
<dbReference type="UniPathway" id="UPA00070">
    <property type="reaction ID" value="UER00120"/>
</dbReference>
<dbReference type="Proteomes" id="UP000007058">
    <property type="component" value="Chromosome"/>
</dbReference>
<dbReference type="GO" id="GO:0005829">
    <property type="term" value="C:cytosol"/>
    <property type="evidence" value="ECO:0007669"/>
    <property type="project" value="TreeGrafter"/>
</dbReference>
<dbReference type="GO" id="GO:0004590">
    <property type="term" value="F:orotidine-5'-phosphate decarboxylase activity"/>
    <property type="evidence" value="ECO:0007669"/>
    <property type="project" value="UniProtKB-UniRule"/>
</dbReference>
<dbReference type="GO" id="GO:0006207">
    <property type="term" value="P:'de novo' pyrimidine nucleobase biosynthetic process"/>
    <property type="evidence" value="ECO:0007669"/>
    <property type="project" value="InterPro"/>
</dbReference>
<dbReference type="GO" id="GO:0044205">
    <property type="term" value="P:'de novo' UMP biosynthetic process"/>
    <property type="evidence" value="ECO:0007669"/>
    <property type="project" value="UniProtKB-UniRule"/>
</dbReference>
<dbReference type="CDD" id="cd04725">
    <property type="entry name" value="OMP_decarboxylase_like"/>
    <property type="match status" value="1"/>
</dbReference>
<dbReference type="Gene3D" id="3.20.20.70">
    <property type="entry name" value="Aldolase class I"/>
    <property type="match status" value="1"/>
</dbReference>
<dbReference type="HAMAP" id="MF_01200_B">
    <property type="entry name" value="OMPdecase_type1_B"/>
    <property type="match status" value="1"/>
</dbReference>
<dbReference type="InterPro" id="IPR013785">
    <property type="entry name" value="Aldolase_TIM"/>
</dbReference>
<dbReference type="InterPro" id="IPR014732">
    <property type="entry name" value="OMPdecase"/>
</dbReference>
<dbReference type="InterPro" id="IPR018089">
    <property type="entry name" value="OMPdecase_AS"/>
</dbReference>
<dbReference type="InterPro" id="IPR047596">
    <property type="entry name" value="OMPdecase_bac"/>
</dbReference>
<dbReference type="InterPro" id="IPR001754">
    <property type="entry name" value="OMPdeCOase_dom"/>
</dbReference>
<dbReference type="InterPro" id="IPR011060">
    <property type="entry name" value="RibuloseP-bd_barrel"/>
</dbReference>
<dbReference type="NCBIfam" id="NF001273">
    <property type="entry name" value="PRK00230.1"/>
    <property type="match status" value="1"/>
</dbReference>
<dbReference type="NCBIfam" id="TIGR01740">
    <property type="entry name" value="pyrF"/>
    <property type="match status" value="1"/>
</dbReference>
<dbReference type="PANTHER" id="PTHR32119">
    <property type="entry name" value="OROTIDINE 5'-PHOSPHATE DECARBOXYLASE"/>
    <property type="match status" value="1"/>
</dbReference>
<dbReference type="PANTHER" id="PTHR32119:SF2">
    <property type="entry name" value="OROTIDINE 5'-PHOSPHATE DECARBOXYLASE"/>
    <property type="match status" value="1"/>
</dbReference>
<dbReference type="Pfam" id="PF00215">
    <property type="entry name" value="OMPdecase"/>
    <property type="match status" value="1"/>
</dbReference>
<dbReference type="SMART" id="SM00934">
    <property type="entry name" value="OMPdecase"/>
    <property type="match status" value="1"/>
</dbReference>
<dbReference type="SUPFAM" id="SSF51366">
    <property type="entry name" value="Ribulose-phoshate binding barrel"/>
    <property type="match status" value="1"/>
</dbReference>
<dbReference type="PROSITE" id="PS00156">
    <property type="entry name" value="OMPDECASE"/>
    <property type="match status" value="1"/>
</dbReference>
<name>PYRF_PARM1</name>
<gene>
    <name evidence="1" type="primary">pyrF</name>
    <name type="ordered locus">amb4002</name>
</gene>
<proteinExistence type="inferred from homology"/>
<accession>Q2W019</accession>
<organism>
    <name type="scientific">Paramagnetospirillum magneticum (strain ATCC 700264 / AMB-1)</name>
    <name type="common">Magnetospirillum magneticum</name>
    <dbReference type="NCBI Taxonomy" id="342108"/>
    <lineage>
        <taxon>Bacteria</taxon>
        <taxon>Pseudomonadati</taxon>
        <taxon>Pseudomonadota</taxon>
        <taxon>Alphaproteobacteria</taxon>
        <taxon>Rhodospirillales</taxon>
        <taxon>Magnetospirillaceae</taxon>
        <taxon>Paramagnetospirillum</taxon>
    </lineage>
</organism>
<evidence type="ECO:0000255" key="1">
    <source>
        <dbReference type="HAMAP-Rule" id="MF_01200"/>
    </source>
</evidence>
<keyword id="KW-0210">Decarboxylase</keyword>
<keyword id="KW-0456">Lyase</keyword>
<keyword id="KW-0665">Pyrimidine biosynthesis</keyword>
<feature type="chain" id="PRO_0000241874" description="Orotidine 5'-phosphate decarboxylase">
    <location>
        <begin position="1"/>
        <end position="235"/>
    </location>
</feature>
<feature type="active site" description="Proton donor" evidence="1">
    <location>
        <position position="61"/>
    </location>
</feature>
<feature type="binding site" evidence="1">
    <location>
        <position position="10"/>
    </location>
    <ligand>
        <name>substrate</name>
    </ligand>
</feature>
<feature type="binding site" evidence="1">
    <location>
        <position position="32"/>
    </location>
    <ligand>
        <name>substrate</name>
    </ligand>
</feature>
<feature type="binding site" evidence="1">
    <location>
        <begin position="59"/>
        <end position="68"/>
    </location>
    <ligand>
        <name>substrate</name>
    </ligand>
</feature>
<feature type="binding site" evidence="1">
    <location>
        <position position="123"/>
    </location>
    <ligand>
        <name>substrate</name>
    </ligand>
</feature>
<feature type="binding site" evidence="1">
    <location>
        <position position="184"/>
    </location>
    <ligand>
        <name>substrate</name>
    </ligand>
</feature>
<feature type="binding site" evidence="1">
    <location>
        <position position="193"/>
    </location>
    <ligand>
        <name>substrate</name>
    </ligand>
</feature>
<feature type="binding site" evidence="1">
    <location>
        <position position="213"/>
    </location>
    <ligand>
        <name>substrate</name>
    </ligand>
</feature>
<feature type="binding site" evidence="1">
    <location>
        <position position="214"/>
    </location>
    <ligand>
        <name>substrate</name>
    </ligand>
</feature>